<sequence>MSQNKRVVITGMGALSPIGNDVKTTWENALKGVNGIDKITRIDTEPYSVHLAGELKNFNIEDHIDKKEARRMDRFTQYAIVAAREAVKDAQLDINENTADRIGVWIGSGIGGMETFEIAHKQLMDKGPRRVSPFFVPMLIPDMATGQVSIDLGAKGPNGATVTACATGTNSIGEAFKIVQRGDADAMITGGTEAPITHMAIAGFSASRALSTNDDIETACRPFQEGRDGFVMGEGAGILVIESLESAQARGANIYAEIVGYGTTGDAYHITAPAPEGEGGSRAMQAAMDDAGIEPKDVQYLNAHGTSTPVGDLNEVKAIKNTFGEAAKHLKVSSTKSMTGHLLGATGGIEAIFSALSIKDSKVAPTIHAVTPDPECDLDIVPNEAQDLDITYAMSNSLGFGGHNAVLVFKKFEA</sequence>
<name>FABF_STAAS</name>
<keyword id="KW-0012">Acyltransferase</keyword>
<keyword id="KW-0275">Fatty acid biosynthesis</keyword>
<keyword id="KW-0276">Fatty acid metabolism</keyword>
<keyword id="KW-0444">Lipid biosynthesis</keyword>
<keyword id="KW-0443">Lipid metabolism</keyword>
<keyword id="KW-0808">Transferase</keyword>
<organism>
    <name type="scientific">Staphylococcus aureus (strain MSSA476)</name>
    <dbReference type="NCBI Taxonomy" id="282459"/>
    <lineage>
        <taxon>Bacteria</taxon>
        <taxon>Bacillati</taxon>
        <taxon>Bacillota</taxon>
        <taxon>Bacilli</taxon>
        <taxon>Bacillales</taxon>
        <taxon>Staphylococcaceae</taxon>
        <taxon>Staphylococcus</taxon>
    </lineage>
</organism>
<evidence type="ECO:0000250" key="1">
    <source>
        <dbReference type="UniProtKB" id="P0AAI5"/>
    </source>
</evidence>
<evidence type="ECO:0000255" key="2">
    <source>
        <dbReference type="PROSITE-ProRule" id="PRU01348"/>
    </source>
</evidence>
<evidence type="ECO:0000305" key="3"/>
<proteinExistence type="inferred from homology"/>
<reference key="1">
    <citation type="journal article" date="2004" name="Proc. Natl. Acad. Sci. U.S.A.">
        <title>Complete genomes of two clinical Staphylococcus aureus strains: evidence for the rapid evolution of virulence and drug resistance.</title>
        <authorList>
            <person name="Holden M.T.G."/>
            <person name="Feil E.J."/>
            <person name="Lindsay J.A."/>
            <person name="Peacock S.J."/>
            <person name="Day N.P.J."/>
            <person name="Enright M.C."/>
            <person name="Foster T.J."/>
            <person name="Moore C.E."/>
            <person name="Hurst L."/>
            <person name="Atkin R."/>
            <person name="Barron A."/>
            <person name="Bason N."/>
            <person name="Bentley S.D."/>
            <person name="Chillingworth C."/>
            <person name="Chillingworth T."/>
            <person name="Churcher C."/>
            <person name="Clark L."/>
            <person name="Corton C."/>
            <person name="Cronin A."/>
            <person name="Doggett J."/>
            <person name="Dowd L."/>
            <person name="Feltwell T."/>
            <person name="Hance Z."/>
            <person name="Harris B."/>
            <person name="Hauser H."/>
            <person name="Holroyd S."/>
            <person name="Jagels K."/>
            <person name="James K.D."/>
            <person name="Lennard N."/>
            <person name="Line A."/>
            <person name="Mayes R."/>
            <person name="Moule S."/>
            <person name="Mungall K."/>
            <person name="Ormond D."/>
            <person name="Quail M.A."/>
            <person name="Rabbinowitsch E."/>
            <person name="Rutherford K.M."/>
            <person name="Sanders M."/>
            <person name="Sharp S."/>
            <person name="Simmonds M."/>
            <person name="Stevens K."/>
            <person name="Whitehead S."/>
            <person name="Barrell B.G."/>
            <person name="Spratt B.G."/>
            <person name="Parkhill J."/>
        </authorList>
    </citation>
    <scope>NUCLEOTIDE SEQUENCE [LARGE SCALE GENOMIC DNA]</scope>
    <source>
        <strain>MSSA476</strain>
    </source>
</reference>
<feature type="chain" id="PRO_0000180324" description="3-oxoacyl-[acyl-carrier-protein] synthase 2">
    <location>
        <begin position="1"/>
        <end position="414"/>
    </location>
</feature>
<feature type="domain" description="Ketosynthase family 3 (KS3)" evidence="2">
    <location>
        <begin position="4"/>
        <end position="411"/>
    </location>
</feature>
<feature type="active site" description="For beta-ketoacyl synthase activity" evidence="2">
    <location>
        <position position="165"/>
    </location>
</feature>
<feature type="active site" description="For beta-ketoacyl synthase activity" evidence="2">
    <location>
        <position position="304"/>
    </location>
</feature>
<feature type="active site" description="For beta-ketoacyl synthase activity" evidence="2">
    <location>
        <position position="341"/>
    </location>
</feature>
<dbReference type="EC" id="2.3.1.179" evidence="1"/>
<dbReference type="EMBL" id="BX571857">
    <property type="protein sequence ID" value="CAG42629.1"/>
    <property type="molecule type" value="Genomic_DNA"/>
</dbReference>
<dbReference type="RefSeq" id="WP_000081240.1">
    <property type="nucleotide sequence ID" value="NC_002953.3"/>
</dbReference>
<dbReference type="SMR" id="Q6GAU2"/>
<dbReference type="KEGG" id="sas:SAS0854"/>
<dbReference type="HOGENOM" id="CLU_000022_69_2_9"/>
<dbReference type="UniPathway" id="UPA00094"/>
<dbReference type="GO" id="GO:0005829">
    <property type="term" value="C:cytosol"/>
    <property type="evidence" value="ECO:0007669"/>
    <property type="project" value="TreeGrafter"/>
</dbReference>
<dbReference type="GO" id="GO:0004315">
    <property type="term" value="F:3-oxoacyl-[acyl-carrier-protein] synthase activity"/>
    <property type="evidence" value="ECO:0007669"/>
    <property type="project" value="UniProtKB-EC"/>
</dbReference>
<dbReference type="GO" id="GO:0006633">
    <property type="term" value="P:fatty acid biosynthetic process"/>
    <property type="evidence" value="ECO:0007669"/>
    <property type="project" value="UniProtKB-UniPathway"/>
</dbReference>
<dbReference type="CDD" id="cd00834">
    <property type="entry name" value="KAS_I_II"/>
    <property type="match status" value="1"/>
</dbReference>
<dbReference type="FunFam" id="3.40.47.10:FF:000026">
    <property type="entry name" value="3-oxoacyl-[acyl-carrier-protein] synthase 2"/>
    <property type="match status" value="1"/>
</dbReference>
<dbReference type="Gene3D" id="3.40.47.10">
    <property type="match status" value="1"/>
</dbReference>
<dbReference type="InterPro" id="IPR017568">
    <property type="entry name" value="3-oxoacyl-ACP_synth-2"/>
</dbReference>
<dbReference type="InterPro" id="IPR000794">
    <property type="entry name" value="Beta-ketoacyl_synthase"/>
</dbReference>
<dbReference type="InterPro" id="IPR018201">
    <property type="entry name" value="Ketoacyl_synth_AS"/>
</dbReference>
<dbReference type="InterPro" id="IPR014031">
    <property type="entry name" value="Ketoacyl_synth_C"/>
</dbReference>
<dbReference type="InterPro" id="IPR014030">
    <property type="entry name" value="Ketoacyl_synth_N"/>
</dbReference>
<dbReference type="InterPro" id="IPR020841">
    <property type="entry name" value="PKS_Beta-ketoAc_synthase_dom"/>
</dbReference>
<dbReference type="InterPro" id="IPR016039">
    <property type="entry name" value="Thiolase-like"/>
</dbReference>
<dbReference type="NCBIfam" id="TIGR03150">
    <property type="entry name" value="fabF"/>
    <property type="match status" value="1"/>
</dbReference>
<dbReference type="NCBIfam" id="NF004970">
    <property type="entry name" value="PRK06333.1"/>
    <property type="match status" value="1"/>
</dbReference>
<dbReference type="NCBIfam" id="NF005589">
    <property type="entry name" value="PRK07314.1"/>
    <property type="match status" value="1"/>
</dbReference>
<dbReference type="PANTHER" id="PTHR11712:SF336">
    <property type="entry name" value="3-OXOACYL-[ACYL-CARRIER-PROTEIN] SYNTHASE, MITOCHONDRIAL"/>
    <property type="match status" value="1"/>
</dbReference>
<dbReference type="PANTHER" id="PTHR11712">
    <property type="entry name" value="POLYKETIDE SYNTHASE-RELATED"/>
    <property type="match status" value="1"/>
</dbReference>
<dbReference type="Pfam" id="PF00109">
    <property type="entry name" value="ketoacyl-synt"/>
    <property type="match status" value="1"/>
</dbReference>
<dbReference type="Pfam" id="PF02801">
    <property type="entry name" value="Ketoacyl-synt_C"/>
    <property type="match status" value="1"/>
</dbReference>
<dbReference type="PIRSF" id="PIRSF000447">
    <property type="entry name" value="KAS_II"/>
    <property type="match status" value="1"/>
</dbReference>
<dbReference type="SMART" id="SM00825">
    <property type="entry name" value="PKS_KS"/>
    <property type="match status" value="1"/>
</dbReference>
<dbReference type="SUPFAM" id="SSF53901">
    <property type="entry name" value="Thiolase-like"/>
    <property type="match status" value="2"/>
</dbReference>
<dbReference type="PROSITE" id="PS00606">
    <property type="entry name" value="KS3_1"/>
    <property type="match status" value="1"/>
</dbReference>
<dbReference type="PROSITE" id="PS52004">
    <property type="entry name" value="KS3_2"/>
    <property type="match status" value="1"/>
</dbReference>
<accession>Q6GAU2</accession>
<comment type="function">
    <text evidence="1">Involved in the type II fatty acid elongation cycle. Catalyzes the elongation of a wide range of acyl-ACP by the addition of two carbons from malonyl-ACP to an acyl acceptor. Can efficiently catalyze the conversion of palmitoleoyl-ACP (cis-hexadec-9-enoyl-ACP) to cis-vaccenoyl-ACP (cis-octadec-11-enoyl-ACP), an essential step in the thermal regulation of fatty acid composition.</text>
</comment>
<comment type="catalytic activity">
    <reaction evidence="1">
        <text>a fatty acyl-[ACP] + malonyl-[ACP] + H(+) = a 3-oxoacyl-[ACP] + holo-[ACP] + CO2</text>
        <dbReference type="Rhea" id="RHEA:22836"/>
        <dbReference type="Rhea" id="RHEA-COMP:9623"/>
        <dbReference type="Rhea" id="RHEA-COMP:9685"/>
        <dbReference type="Rhea" id="RHEA-COMP:9916"/>
        <dbReference type="Rhea" id="RHEA-COMP:14125"/>
        <dbReference type="ChEBI" id="CHEBI:15378"/>
        <dbReference type="ChEBI" id="CHEBI:16526"/>
        <dbReference type="ChEBI" id="CHEBI:64479"/>
        <dbReference type="ChEBI" id="CHEBI:78449"/>
        <dbReference type="ChEBI" id="CHEBI:78776"/>
        <dbReference type="ChEBI" id="CHEBI:138651"/>
    </reaction>
</comment>
<comment type="catalytic activity">
    <reaction evidence="1">
        <text>(9Z)-hexadecenoyl-[ACP] + malonyl-[ACP] + H(+) = 3-oxo-(11Z)-octadecenoyl-[ACP] + holo-[ACP] + CO2</text>
        <dbReference type="Rhea" id="RHEA:55040"/>
        <dbReference type="Rhea" id="RHEA-COMP:9623"/>
        <dbReference type="Rhea" id="RHEA-COMP:9685"/>
        <dbReference type="Rhea" id="RHEA-COMP:10800"/>
        <dbReference type="Rhea" id="RHEA-COMP:14074"/>
        <dbReference type="ChEBI" id="CHEBI:15378"/>
        <dbReference type="ChEBI" id="CHEBI:16526"/>
        <dbReference type="ChEBI" id="CHEBI:64479"/>
        <dbReference type="ChEBI" id="CHEBI:78449"/>
        <dbReference type="ChEBI" id="CHEBI:83989"/>
        <dbReference type="ChEBI" id="CHEBI:138538"/>
        <dbReference type="EC" id="2.3.1.179"/>
    </reaction>
</comment>
<comment type="pathway">
    <text evidence="1">Lipid metabolism; fatty acid biosynthesis.</text>
</comment>
<comment type="similarity">
    <text evidence="3">Belongs to the thiolase-like superfamily. Beta-ketoacyl-ACP synthases family.</text>
</comment>
<gene>
    <name type="primary">fabF</name>
    <name type="ordered locus">SAS0854</name>
</gene>
<protein>
    <recommendedName>
        <fullName>3-oxoacyl-[acyl-carrier-protein] synthase 2</fullName>
        <ecNumber evidence="1">2.3.1.179</ecNumber>
    </recommendedName>
    <alternativeName>
        <fullName>3-oxoacyl-[acyl-carrier-protein] synthase II</fullName>
    </alternativeName>
    <alternativeName>
        <fullName>Beta-ketoacyl-ACP synthase II</fullName>
        <shortName>KAS II</shortName>
    </alternativeName>
</protein>